<reference key="1">
    <citation type="journal article" date="1999" name="Nature">
        <title>Genomic sequence comparison of two unrelated isolates of the human gastric pathogen Helicobacter pylori.</title>
        <authorList>
            <person name="Alm R.A."/>
            <person name="Ling L.-S.L."/>
            <person name="Moir D.T."/>
            <person name="King B.L."/>
            <person name="Brown E.D."/>
            <person name="Doig P.C."/>
            <person name="Smith D.R."/>
            <person name="Noonan B."/>
            <person name="Guild B.C."/>
            <person name="deJonge B.L."/>
            <person name="Carmel G."/>
            <person name="Tummino P.J."/>
            <person name="Caruso A."/>
            <person name="Uria-Nickelsen M."/>
            <person name="Mills D.M."/>
            <person name="Ives C."/>
            <person name="Gibson R."/>
            <person name="Merberg D."/>
            <person name="Mills S.D."/>
            <person name="Jiang Q."/>
            <person name="Taylor D.E."/>
            <person name="Vovis G.F."/>
            <person name="Trust T.J."/>
        </authorList>
    </citation>
    <scope>NUCLEOTIDE SEQUENCE [LARGE SCALE GENOMIC DNA]</scope>
    <source>
        <strain>J99 / ATCC 700824</strain>
    </source>
</reference>
<sequence length="283" mass="32572">MNAWNTIYERFNPIAFSLGGIEVHWYGLAYACAIVVAFYMALRMIQKDPKRFPIERKEFESYFLWAELGIVLGARIGYVLIYEPNSSYYLTHFWQIFNPFDSHGNFIGIRGMSYHGGLVGFLIASYLYSRKDLKKLLIYLDLIAISLPLGYVFGRIGNFLNQELFGRIVPKDSHLGQIIGIMVDNELRYPSQLIEAFLEGVVVFLMVMWAKKHTKTHGLLIVVYGLGYSLMRFIAEFYREPDSQLGVYFLNLSMGQILSVFMVIVSLGILLYATKNSKKIKEE</sequence>
<feature type="chain" id="PRO_0000172612" description="Phosphatidylglycerol--prolipoprotein diacylglyceryl transferase">
    <location>
        <begin position="1"/>
        <end position="283"/>
    </location>
</feature>
<feature type="transmembrane region" description="Helical" evidence="1">
    <location>
        <begin position="18"/>
        <end position="38"/>
    </location>
</feature>
<feature type="transmembrane region" description="Helical" evidence="1">
    <location>
        <begin position="62"/>
        <end position="82"/>
    </location>
</feature>
<feature type="transmembrane region" description="Helical" evidence="1">
    <location>
        <begin position="106"/>
        <end position="126"/>
    </location>
</feature>
<feature type="transmembrane region" description="Helical" evidence="1">
    <location>
        <begin position="136"/>
        <end position="156"/>
    </location>
</feature>
<feature type="transmembrane region" description="Helical" evidence="1">
    <location>
        <begin position="190"/>
        <end position="210"/>
    </location>
</feature>
<feature type="transmembrane region" description="Helical" evidence="1">
    <location>
        <begin position="218"/>
        <end position="238"/>
    </location>
</feature>
<feature type="transmembrane region" description="Helical" evidence="1">
    <location>
        <begin position="252"/>
        <end position="272"/>
    </location>
</feature>
<feature type="binding site" evidence="1">
    <location>
        <position position="155"/>
    </location>
    <ligand>
        <name>a 1,2-diacyl-sn-glycero-3-phospho-(1'-sn-glycerol)</name>
        <dbReference type="ChEBI" id="CHEBI:64716"/>
    </ligand>
</feature>
<dbReference type="EC" id="2.5.1.145" evidence="1"/>
<dbReference type="EMBL" id="AE001439">
    <property type="protein sequence ID" value="AAD06473.1"/>
    <property type="molecule type" value="Genomic_DNA"/>
</dbReference>
<dbReference type="PIR" id="B71876">
    <property type="entry name" value="B71876"/>
</dbReference>
<dbReference type="RefSeq" id="WP_000995152.1">
    <property type="nucleotide sequence ID" value="NC_000921.1"/>
</dbReference>
<dbReference type="SMR" id="Q9ZKP6"/>
<dbReference type="KEGG" id="hpj:jhp_0889"/>
<dbReference type="PATRIC" id="fig|85963.30.peg.72"/>
<dbReference type="eggNOG" id="COG0682">
    <property type="taxonomic scope" value="Bacteria"/>
</dbReference>
<dbReference type="UniPathway" id="UPA00664"/>
<dbReference type="Proteomes" id="UP000000804">
    <property type="component" value="Chromosome"/>
</dbReference>
<dbReference type="GO" id="GO:0005886">
    <property type="term" value="C:plasma membrane"/>
    <property type="evidence" value="ECO:0007669"/>
    <property type="project" value="UniProtKB-SubCell"/>
</dbReference>
<dbReference type="GO" id="GO:0008961">
    <property type="term" value="F:phosphatidylglycerol-prolipoprotein diacylglyceryl transferase activity"/>
    <property type="evidence" value="ECO:0007669"/>
    <property type="project" value="UniProtKB-UniRule"/>
</dbReference>
<dbReference type="GO" id="GO:0042158">
    <property type="term" value="P:lipoprotein biosynthetic process"/>
    <property type="evidence" value="ECO:0007669"/>
    <property type="project" value="UniProtKB-UniRule"/>
</dbReference>
<dbReference type="HAMAP" id="MF_01147">
    <property type="entry name" value="Lgt"/>
    <property type="match status" value="1"/>
</dbReference>
<dbReference type="InterPro" id="IPR001640">
    <property type="entry name" value="Lgt"/>
</dbReference>
<dbReference type="NCBIfam" id="TIGR00544">
    <property type="entry name" value="lgt"/>
    <property type="match status" value="1"/>
</dbReference>
<dbReference type="PANTHER" id="PTHR30589:SF0">
    <property type="entry name" value="PHOSPHATIDYLGLYCEROL--PROLIPOPROTEIN DIACYLGLYCERYL TRANSFERASE"/>
    <property type="match status" value="1"/>
</dbReference>
<dbReference type="PANTHER" id="PTHR30589">
    <property type="entry name" value="PROLIPOPROTEIN DIACYLGLYCERYL TRANSFERASE"/>
    <property type="match status" value="1"/>
</dbReference>
<dbReference type="Pfam" id="PF01790">
    <property type="entry name" value="LGT"/>
    <property type="match status" value="1"/>
</dbReference>
<dbReference type="PROSITE" id="PS01311">
    <property type="entry name" value="LGT"/>
    <property type="match status" value="1"/>
</dbReference>
<organism>
    <name type="scientific">Helicobacter pylori (strain J99 / ATCC 700824)</name>
    <name type="common">Campylobacter pylori J99</name>
    <dbReference type="NCBI Taxonomy" id="85963"/>
    <lineage>
        <taxon>Bacteria</taxon>
        <taxon>Pseudomonadati</taxon>
        <taxon>Campylobacterota</taxon>
        <taxon>Epsilonproteobacteria</taxon>
        <taxon>Campylobacterales</taxon>
        <taxon>Helicobacteraceae</taxon>
        <taxon>Helicobacter</taxon>
    </lineage>
</organism>
<protein>
    <recommendedName>
        <fullName evidence="1">Phosphatidylglycerol--prolipoprotein diacylglyceryl transferase</fullName>
        <ecNumber evidence="1">2.5.1.145</ecNumber>
    </recommendedName>
</protein>
<comment type="function">
    <text evidence="1">Catalyzes the transfer of the diacylglyceryl group from phosphatidylglycerol to the sulfhydryl group of the N-terminal cysteine of a prolipoprotein, the first step in the formation of mature lipoproteins.</text>
</comment>
<comment type="catalytic activity">
    <reaction evidence="1">
        <text>L-cysteinyl-[prolipoprotein] + a 1,2-diacyl-sn-glycero-3-phospho-(1'-sn-glycerol) = an S-1,2-diacyl-sn-glyceryl-L-cysteinyl-[prolipoprotein] + sn-glycerol 1-phosphate + H(+)</text>
        <dbReference type="Rhea" id="RHEA:56712"/>
        <dbReference type="Rhea" id="RHEA-COMP:14679"/>
        <dbReference type="Rhea" id="RHEA-COMP:14680"/>
        <dbReference type="ChEBI" id="CHEBI:15378"/>
        <dbReference type="ChEBI" id="CHEBI:29950"/>
        <dbReference type="ChEBI" id="CHEBI:57685"/>
        <dbReference type="ChEBI" id="CHEBI:64716"/>
        <dbReference type="ChEBI" id="CHEBI:140658"/>
        <dbReference type="EC" id="2.5.1.145"/>
    </reaction>
</comment>
<comment type="pathway">
    <text evidence="1">Protein modification; lipoprotein biosynthesis (diacylglyceryl transfer).</text>
</comment>
<comment type="subcellular location">
    <subcellularLocation>
        <location evidence="1">Cell inner membrane</location>
        <topology evidence="1">Multi-pass membrane protein</topology>
    </subcellularLocation>
</comment>
<comment type="similarity">
    <text evidence="1 2">Belongs to the Lgt family.</text>
</comment>
<keyword id="KW-0997">Cell inner membrane</keyword>
<keyword id="KW-1003">Cell membrane</keyword>
<keyword id="KW-0472">Membrane</keyword>
<keyword id="KW-0808">Transferase</keyword>
<keyword id="KW-0812">Transmembrane</keyword>
<keyword id="KW-1133">Transmembrane helix</keyword>
<gene>
    <name evidence="1" type="primary">lgt</name>
    <name type="ordered locus">jhp_0889</name>
</gene>
<accession>Q9ZKP6</accession>
<name>LGT_HELPJ</name>
<proteinExistence type="inferred from homology"/>
<evidence type="ECO:0000255" key="1">
    <source>
        <dbReference type="HAMAP-Rule" id="MF_01147"/>
    </source>
</evidence>
<evidence type="ECO:0000305" key="2"/>